<gene>
    <name evidence="1" type="primary">dtpA</name>
    <name type="ordered locus">CKO_01646</name>
</gene>
<comment type="function">
    <text evidence="1">Proton-dependent permease that transports di- and tripeptides.</text>
</comment>
<comment type="subcellular location">
    <subcellularLocation>
        <location evidence="1">Cell inner membrane</location>
        <topology evidence="1">Multi-pass membrane protein</topology>
    </subcellularLocation>
</comment>
<comment type="similarity">
    <text evidence="1">Belongs to the major facilitator superfamily. Proton-dependent oligopeptide transporter (POT/PTR) (TC 2.A.17) family. DtpA subfamily.</text>
</comment>
<comment type="sequence caution" evidence="2">
    <conflict type="erroneous initiation">
        <sequence resource="EMBL-CDS" id="ABV12778"/>
    </conflict>
    <text>Extended N-terminus.</text>
</comment>
<evidence type="ECO:0000255" key="1">
    <source>
        <dbReference type="HAMAP-Rule" id="MF_01878"/>
    </source>
</evidence>
<evidence type="ECO:0000305" key="2"/>
<sequence length="501" mass="54096">MSTANNKPTESVSLNAFKQPKSFYLIFSIELWERFGYYGLQGIMAVYLVKQLGMSEADSITLFSSFSALVYGLVAIGGWLGDKVLGTKRVIMLGAIVLAIGYGLVAWSGHDVAIVYMGMATIAVGNGLFKANPSSLLSTCYAKDDPRLDGAFTMYYMSINIGSFFSMLATPWLAAKFGWSVAFALSFVGMLITVVNFLFCRSWVKDYGSKPDFEAVHFGKLLATIAGVIVLIAIATWLLHNQGIARMVLGVIALGIVIIFGKEAFAMQGAARRKMIVAFILMLEAIIFFVLYSQMPTSLNFFAIRNVEHTILGIAVEPEQYQALNPFWIIIGSPILAAIYNKMGDTLPMPTKFAIGMVLCSGAFLVLPLGAKFATDAGIVSVNWLILSYGLQSIGELMISGLGLAMVAQLVPQRLMGFIMGSWFLTTAGANLIGGYVAGMMAVPENVTDPLMSLEVYGRVFLQIGVATAVIAALMLITAPKLNRMTQDDEENAKAAKTATA</sequence>
<proteinExistence type="inferred from homology"/>
<name>DTPA_CITK8</name>
<dbReference type="EMBL" id="CP000822">
    <property type="protein sequence ID" value="ABV12778.1"/>
    <property type="status" value="ALT_INIT"/>
    <property type="molecule type" value="Genomic_DNA"/>
</dbReference>
<dbReference type="RefSeq" id="WP_024130362.1">
    <property type="nucleotide sequence ID" value="NC_009792.1"/>
</dbReference>
<dbReference type="SMR" id="A8AH15"/>
<dbReference type="GeneID" id="45135688"/>
<dbReference type="KEGG" id="cko:CKO_01646"/>
<dbReference type="HOGENOM" id="CLU_004790_0_0_6"/>
<dbReference type="OrthoDB" id="9772725at2"/>
<dbReference type="Proteomes" id="UP000008148">
    <property type="component" value="Chromosome"/>
</dbReference>
<dbReference type="GO" id="GO:0005886">
    <property type="term" value="C:plasma membrane"/>
    <property type="evidence" value="ECO:0007669"/>
    <property type="project" value="UniProtKB-SubCell"/>
</dbReference>
<dbReference type="GO" id="GO:0071916">
    <property type="term" value="F:dipeptide transmembrane transporter activity"/>
    <property type="evidence" value="ECO:0007669"/>
    <property type="project" value="UniProtKB-UniRule"/>
</dbReference>
<dbReference type="GO" id="GO:0015333">
    <property type="term" value="F:peptide:proton symporter activity"/>
    <property type="evidence" value="ECO:0007669"/>
    <property type="project" value="UniProtKB-UniRule"/>
</dbReference>
<dbReference type="GO" id="GO:0042937">
    <property type="term" value="F:tripeptide transmembrane transporter activity"/>
    <property type="evidence" value="ECO:0007669"/>
    <property type="project" value="UniProtKB-UniRule"/>
</dbReference>
<dbReference type="GO" id="GO:0015031">
    <property type="term" value="P:protein transport"/>
    <property type="evidence" value="ECO:0007669"/>
    <property type="project" value="UniProtKB-KW"/>
</dbReference>
<dbReference type="CDD" id="cd17346">
    <property type="entry name" value="MFS_DtpA_like"/>
    <property type="match status" value="1"/>
</dbReference>
<dbReference type="FunFam" id="1.20.1250.20:FF:000017">
    <property type="entry name" value="Dipeptide and tripeptide permease A"/>
    <property type="match status" value="1"/>
</dbReference>
<dbReference type="Gene3D" id="1.20.1250.20">
    <property type="entry name" value="MFS general substrate transporter like domains"/>
    <property type="match status" value="1"/>
</dbReference>
<dbReference type="HAMAP" id="MF_01878">
    <property type="entry name" value="PTR2_DtpA_subfam"/>
    <property type="match status" value="1"/>
</dbReference>
<dbReference type="InterPro" id="IPR023517">
    <property type="entry name" value="AA/pep_transptr_DtpA"/>
</dbReference>
<dbReference type="InterPro" id="IPR005279">
    <property type="entry name" value="Dipep/tripep_permease"/>
</dbReference>
<dbReference type="InterPro" id="IPR020846">
    <property type="entry name" value="MFS_dom"/>
</dbReference>
<dbReference type="InterPro" id="IPR036259">
    <property type="entry name" value="MFS_trans_sf"/>
</dbReference>
<dbReference type="InterPro" id="IPR050171">
    <property type="entry name" value="MFS_Transporters"/>
</dbReference>
<dbReference type="InterPro" id="IPR000109">
    <property type="entry name" value="POT_fam"/>
</dbReference>
<dbReference type="InterPro" id="IPR018456">
    <property type="entry name" value="PTR2_symporter_CS"/>
</dbReference>
<dbReference type="NCBIfam" id="NF007137">
    <property type="entry name" value="PRK09584.1"/>
    <property type="match status" value="1"/>
</dbReference>
<dbReference type="NCBIfam" id="TIGR00924">
    <property type="entry name" value="yjdL_sub1_fam"/>
    <property type="match status" value="1"/>
</dbReference>
<dbReference type="PANTHER" id="PTHR23517:SF15">
    <property type="entry name" value="PROTON-DEPENDENT OLIGOPEPTIDE FAMILY TRANSPORT PROTEIN"/>
    <property type="match status" value="1"/>
</dbReference>
<dbReference type="PANTHER" id="PTHR23517">
    <property type="entry name" value="RESISTANCE PROTEIN MDTM, PUTATIVE-RELATED-RELATED"/>
    <property type="match status" value="1"/>
</dbReference>
<dbReference type="Pfam" id="PF00854">
    <property type="entry name" value="PTR2"/>
    <property type="match status" value="1"/>
</dbReference>
<dbReference type="SUPFAM" id="SSF103473">
    <property type="entry name" value="MFS general substrate transporter"/>
    <property type="match status" value="1"/>
</dbReference>
<dbReference type="PROSITE" id="PS50850">
    <property type="entry name" value="MFS"/>
    <property type="match status" value="1"/>
</dbReference>
<dbReference type="PROSITE" id="PS01022">
    <property type="entry name" value="PTR2_1"/>
    <property type="match status" value="1"/>
</dbReference>
<dbReference type="PROSITE" id="PS01023">
    <property type="entry name" value="PTR2_2"/>
    <property type="match status" value="1"/>
</dbReference>
<accession>A8AH15</accession>
<feature type="chain" id="PRO_0000395173" description="Dipeptide and tripeptide permease A">
    <location>
        <begin position="1"/>
        <end position="501"/>
    </location>
</feature>
<feature type="topological domain" description="Cytoplasmic" evidence="1">
    <location>
        <begin position="1"/>
        <end position="34"/>
    </location>
</feature>
<feature type="transmembrane region" description="Helical" evidence="1">
    <location>
        <begin position="35"/>
        <end position="55"/>
    </location>
</feature>
<feature type="topological domain" description="Periplasmic" evidence="1">
    <location>
        <begin position="56"/>
        <end position="59"/>
    </location>
</feature>
<feature type="transmembrane region" description="Helical" evidence="1">
    <location>
        <begin position="60"/>
        <end position="80"/>
    </location>
</feature>
<feature type="topological domain" description="Cytoplasmic" evidence="1">
    <location>
        <begin position="81"/>
        <end position="89"/>
    </location>
</feature>
<feature type="transmembrane region" description="Helical" evidence="1">
    <location>
        <begin position="90"/>
        <end position="110"/>
    </location>
</feature>
<feature type="topological domain" description="Periplasmic" evidence="1">
    <location>
        <position position="111"/>
    </location>
</feature>
<feature type="transmembrane region" description="Helical" evidence="1">
    <location>
        <begin position="112"/>
        <end position="132"/>
    </location>
</feature>
<feature type="topological domain" description="Cytoplasmic" evidence="1">
    <location>
        <begin position="133"/>
        <end position="153"/>
    </location>
</feature>
<feature type="transmembrane region" description="Helical" evidence="1">
    <location>
        <begin position="154"/>
        <end position="174"/>
    </location>
</feature>
<feature type="topological domain" description="Periplasmic" evidence="1">
    <location>
        <begin position="175"/>
        <end position="178"/>
    </location>
</feature>
<feature type="transmembrane region" description="Helical" evidence="1">
    <location>
        <begin position="179"/>
        <end position="199"/>
    </location>
</feature>
<feature type="topological domain" description="Cytoplasmic" evidence="1">
    <location>
        <begin position="200"/>
        <end position="217"/>
    </location>
</feature>
<feature type="transmembrane region" description="Helical" evidence="1">
    <location>
        <begin position="218"/>
        <end position="238"/>
    </location>
</feature>
<feature type="topological domain" description="Periplasmic" evidence="1">
    <location>
        <begin position="239"/>
        <end position="246"/>
    </location>
</feature>
<feature type="transmembrane region" description="Helical" evidence="1">
    <location>
        <begin position="247"/>
        <end position="267"/>
    </location>
</feature>
<feature type="topological domain" description="Cytoplasmic" evidence="1">
    <location>
        <begin position="268"/>
        <end position="274"/>
    </location>
</feature>
<feature type="transmembrane region" description="Helical" evidence="1">
    <location>
        <begin position="275"/>
        <end position="295"/>
    </location>
</feature>
<feature type="topological domain" description="Periplasmic" evidence="1">
    <location>
        <begin position="296"/>
        <end position="320"/>
    </location>
</feature>
<feature type="transmembrane region" description="Helical" evidence="1">
    <location>
        <begin position="321"/>
        <end position="341"/>
    </location>
</feature>
<feature type="topological domain" description="Cytoplasmic" evidence="1">
    <location>
        <begin position="342"/>
        <end position="352"/>
    </location>
</feature>
<feature type="transmembrane region" description="Helical" evidence="1">
    <location>
        <begin position="353"/>
        <end position="373"/>
    </location>
</feature>
<feature type="topological domain" description="Periplasmic" evidence="1">
    <location>
        <begin position="374"/>
        <end position="383"/>
    </location>
</feature>
<feature type="transmembrane region" description="Helical" evidence="1">
    <location>
        <begin position="384"/>
        <end position="404"/>
    </location>
</feature>
<feature type="topological domain" description="Cytoplasmic" evidence="1">
    <location>
        <begin position="405"/>
        <end position="414"/>
    </location>
</feature>
<feature type="transmembrane region" description="Helical" evidence="1">
    <location>
        <begin position="415"/>
        <end position="435"/>
    </location>
</feature>
<feature type="topological domain" description="Periplasmic" evidence="1">
    <location>
        <begin position="436"/>
        <end position="459"/>
    </location>
</feature>
<feature type="transmembrane region" description="Helical" evidence="1">
    <location>
        <begin position="460"/>
        <end position="480"/>
    </location>
</feature>
<feature type="topological domain" description="Cytoplasmic" evidence="1">
    <location>
        <begin position="481"/>
        <end position="501"/>
    </location>
</feature>
<organism>
    <name type="scientific">Citrobacter koseri (strain ATCC BAA-895 / CDC 4225-83 / SGSC4696)</name>
    <dbReference type="NCBI Taxonomy" id="290338"/>
    <lineage>
        <taxon>Bacteria</taxon>
        <taxon>Pseudomonadati</taxon>
        <taxon>Pseudomonadota</taxon>
        <taxon>Gammaproteobacteria</taxon>
        <taxon>Enterobacterales</taxon>
        <taxon>Enterobacteriaceae</taxon>
        <taxon>Citrobacter</taxon>
    </lineage>
</organism>
<protein>
    <recommendedName>
        <fullName evidence="1">Dipeptide and tripeptide permease A</fullName>
    </recommendedName>
</protein>
<keyword id="KW-0997">Cell inner membrane</keyword>
<keyword id="KW-1003">Cell membrane</keyword>
<keyword id="KW-0472">Membrane</keyword>
<keyword id="KW-0571">Peptide transport</keyword>
<keyword id="KW-0653">Protein transport</keyword>
<keyword id="KW-1185">Reference proteome</keyword>
<keyword id="KW-0812">Transmembrane</keyword>
<keyword id="KW-1133">Transmembrane helix</keyword>
<keyword id="KW-0813">Transport</keyword>
<reference key="1">
    <citation type="submission" date="2007-08" db="EMBL/GenBank/DDBJ databases">
        <authorList>
            <consortium name="The Citrobacter koseri Genome Sequencing Project"/>
            <person name="McClelland M."/>
            <person name="Sanderson E.K."/>
            <person name="Porwollik S."/>
            <person name="Spieth J."/>
            <person name="Clifton W.S."/>
            <person name="Latreille P."/>
            <person name="Courtney L."/>
            <person name="Wang C."/>
            <person name="Pepin K."/>
            <person name="Bhonagiri V."/>
            <person name="Nash W."/>
            <person name="Johnson M."/>
            <person name="Thiruvilangam P."/>
            <person name="Wilson R."/>
        </authorList>
    </citation>
    <scope>NUCLEOTIDE SEQUENCE [LARGE SCALE GENOMIC DNA]</scope>
    <source>
        <strain>ATCC BAA-895 / CDC 4225-83 / SGSC4696</strain>
    </source>
</reference>